<accession>Q9PIN2</accession>
<accession>Q0PBP2</accession>
<proteinExistence type="inferred from homology"/>
<dbReference type="EMBL" id="AL111168">
    <property type="protein sequence ID" value="CAL34417.1"/>
    <property type="molecule type" value="Genomic_DNA"/>
</dbReference>
<dbReference type="PIR" id="F81444">
    <property type="entry name" value="F81444"/>
</dbReference>
<dbReference type="RefSeq" id="WP_002851840.1">
    <property type="nucleotide sequence ID" value="NZ_SZUC01000004.1"/>
</dbReference>
<dbReference type="RefSeq" id="YP_002343705.1">
    <property type="nucleotide sequence ID" value="NC_002163.1"/>
</dbReference>
<dbReference type="SMR" id="Q9PIN2"/>
<dbReference type="IntAct" id="Q9PIN2">
    <property type="interactions" value="1"/>
</dbReference>
<dbReference type="STRING" id="192222.Cj0263"/>
<dbReference type="PaxDb" id="192222-Cj0263"/>
<dbReference type="EnsemblBacteria" id="CAL34417">
    <property type="protein sequence ID" value="CAL34417"/>
    <property type="gene ID" value="Cj0263"/>
</dbReference>
<dbReference type="GeneID" id="904588"/>
<dbReference type="KEGG" id="cje:Cj0263"/>
<dbReference type="PATRIC" id="fig|192222.6.peg.257"/>
<dbReference type="eggNOG" id="COG0428">
    <property type="taxonomic scope" value="Bacteria"/>
</dbReference>
<dbReference type="HOGENOM" id="CLU_015114_1_3_7"/>
<dbReference type="OrthoDB" id="9787346at2"/>
<dbReference type="Proteomes" id="UP000000799">
    <property type="component" value="Chromosome"/>
</dbReference>
<dbReference type="GO" id="GO:0005886">
    <property type="term" value="C:plasma membrane"/>
    <property type="evidence" value="ECO:0007669"/>
    <property type="project" value="UniProtKB-SubCell"/>
</dbReference>
<dbReference type="GO" id="GO:0046872">
    <property type="term" value="F:metal ion binding"/>
    <property type="evidence" value="ECO:0007669"/>
    <property type="project" value="UniProtKB-KW"/>
</dbReference>
<dbReference type="GO" id="GO:0005385">
    <property type="term" value="F:zinc ion transmembrane transporter activity"/>
    <property type="evidence" value="ECO:0007669"/>
    <property type="project" value="UniProtKB-UniRule"/>
</dbReference>
<dbReference type="HAMAP" id="MF_00548">
    <property type="entry name" value="ZupT"/>
    <property type="match status" value="1"/>
</dbReference>
<dbReference type="InterPro" id="IPR003689">
    <property type="entry name" value="ZIP"/>
</dbReference>
<dbReference type="InterPro" id="IPR023498">
    <property type="entry name" value="Zn_transptr_ZupT"/>
</dbReference>
<dbReference type="NCBIfam" id="NF003243">
    <property type="entry name" value="PRK04201.1"/>
    <property type="match status" value="1"/>
</dbReference>
<dbReference type="PANTHER" id="PTHR11040:SF205">
    <property type="entry name" value="ZINC TRANSPORTER ZUPT"/>
    <property type="match status" value="1"/>
</dbReference>
<dbReference type="PANTHER" id="PTHR11040">
    <property type="entry name" value="ZINC/IRON TRANSPORTER"/>
    <property type="match status" value="1"/>
</dbReference>
<dbReference type="Pfam" id="PF02535">
    <property type="entry name" value="Zip"/>
    <property type="match status" value="2"/>
</dbReference>
<organism>
    <name type="scientific">Campylobacter jejuni subsp. jejuni serotype O:2 (strain ATCC 700819 / NCTC 11168)</name>
    <dbReference type="NCBI Taxonomy" id="192222"/>
    <lineage>
        <taxon>Bacteria</taxon>
        <taxon>Pseudomonadati</taxon>
        <taxon>Campylobacterota</taxon>
        <taxon>Epsilonproteobacteria</taxon>
        <taxon>Campylobacterales</taxon>
        <taxon>Campylobacteraceae</taxon>
        <taxon>Campylobacter</taxon>
    </lineage>
</organism>
<reference key="1">
    <citation type="journal article" date="2000" name="Nature">
        <title>The genome sequence of the food-borne pathogen Campylobacter jejuni reveals hypervariable sequences.</title>
        <authorList>
            <person name="Parkhill J."/>
            <person name="Wren B.W."/>
            <person name="Mungall K.L."/>
            <person name="Ketley J.M."/>
            <person name="Churcher C.M."/>
            <person name="Basham D."/>
            <person name="Chillingworth T."/>
            <person name="Davies R.M."/>
            <person name="Feltwell T."/>
            <person name="Holroyd S."/>
            <person name="Jagels K."/>
            <person name="Karlyshev A.V."/>
            <person name="Moule S."/>
            <person name="Pallen M.J."/>
            <person name="Penn C.W."/>
            <person name="Quail M.A."/>
            <person name="Rajandream M.A."/>
            <person name="Rutherford K.M."/>
            <person name="van Vliet A.H.M."/>
            <person name="Whitehead S."/>
            <person name="Barrell B.G."/>
        </authorList>
    </citation>
    <scope>NUCLEOTIDE SEQUENCE [LARGE SCALE GENOMIC DNA]</scope>
    <source>
        <strain>ATCC 700819 / NCTC 11168</strain>
    </source>
</reference>
<protein>
    <recommendedName>
        <fullName evidence="1">Zinc transporter ZupT</fullName>
    </recommendedName>
</protein>
<keyword id="KW-0997">Cell inner membrane</keyword>
<keyword id="KW-1003">Cell membrane</keyword>
<keyword id="KW-0406">Ion transport</keyword>
<keyword id="KW-0408">Iron</keyword>
<keyword id="KW-0472">Membrane</keyword>
<keyword id="KW-0479">Metal-binding</keyword>
<keyword id="KW-1185">Reference proteome</keyword>
<keyword id="KW-0812">Transmembrane</keyword>
<keyword id="KW-1133">Transmembrane helix</keyword>
<keyword id="KW-0813">Transport</keyword>
<keyword id="KW-0862">Zinc</keyword>
<keyword id="KW-0864">Zinc transport</keyword>
<evidence type="ECO:0000255" key="1">
    <source>
        <dbReference type="HAMAP-Rule" id="MF_00548"/>
    </source>
</evidence>
<evidence type="ECO:0000305" key="2"/>
<sequence>MQFTFEQIFIAMLLTLFAGFSTAIGSIIAFFSRKDDLRVLSLGLGFSAGVMIYISFMEILPTALKDFKNHYDSHWAELLGLACFFGGILISLLIDKLIPEDVNPHEPKEDLSELKICPLPQKGQNPPKFHPGEKLHQINTKALKRTGIFTALAIAIHNFPEGFATFISSLDNLTLGIAIAIAVAIHNIPEGLAVSLPIYHATGDKKKAFIYSALSGFAEPLGAFVGALILLPFIGDLTLAISFAVIAGIMVFISLDELLPAAKTYDKAHDSLYGLIAGMAIMALSLNLLGQ</sequence>
<feature type="chain" id="PRO_0000207267" description="Zinc transporter ZupT">
    <location>
        <begin position="1"/>
        <end position="291"/>
    </location>
</feature>
<feature type="transmembrane region" description="Helical" evidence="1">
    <location>
        <begin position="8"/>
        <end position="28"/>
    </location>
</feature>
<feature type="transmembrane region" description="Helical" evidence="1">
    <location>
        <begin position="39"/>
        <end position="59"/>
    </location>
</feature>
<feature type="transmembrane region" description="Helical" evidence="1">
    <location>
        <begin position="74"/>
        <end position="94"/>
    </location>
</feature>
<feature type="transmembrane region" description="Helical" evidence="1">
    <location>
        <begin position="147"/>
        <end position="167"/>
    </location>
</feature>
<feature type="transmembrane region" description="Helical" evidence="1">
    <location>
        <begin position="174"/>
        <end position="194"/>
    </location>
</feature>
<feature type="transmembrane region" description="Helical" evidence="1">
    <location>
        <begin position="209"/>
        <end position="229"/>
    </location>
</feature>
<feature type="transmembrane region" description="Helical" evidence="1">
    <location>
        <begin position="233"/>
        <end position="253"/>
    </location>
</feature>
<feature type="transmembrane region" description="Helical" evidence="1">
    <location>
        <begin position="271"/>
        <end position="291"/>
    </location>
</feature>
<feature type="binding site" description="M2 metal binding site" evidence="1">
    <location>
        <position position="158"/>
    </location>
    <ligand>
        <name>Fe(2+)</name>
        <dbReference type="ChEBI" id="CHEBI:29033"/>
    </ligand>
</feature>
<feature type="binding site" description="M2 metal binding site" evidence="1">
    <location>
        <position position="161"/>
    </location>
    <ligand>
        <name>Fe(2+)</name>
        <dbReference type="ChEBI" id="CHEBI:29033"/>
    </ligand>
</feature>
<feature type="binding site" description="M1 metal binding site" evidence="1">
    <location>
        <position position="161"/>
    </location>
    <ligand>
        <name>Zn(2+)</name>
        <dbReference type="ChEBI" id="CHEBI:29105"/>
    </ligand>
</feature>
<feature type="binding site" description="M1 metal binding site" evidence="1">
    <location>
        <position position="186"/>
    </location>
    <ligand>
        <name>Zn(2+)</name>
        <dbReference type="ChEBI" id="CHEBI:29105"/>
    </ligand>
</feature>
<feature type="binding site" description="M2 metal binding site" evidence="1">
    <location>
        <position position="187"/>
    </location>
    <ligand>
        <name>Fe(2+)</name>
        <dbReference type="ChEBI" id="CHEBI:29033"/>
    </ligand>
</feature>
<feature type="binding site" description="M2 metal binding site" evidence="1">
    <location>
        <position position="190"/>
    </location>
    <ligand>
        <name>Fe(2+)</name>
        <dbReference type="ChEBI" id="CHEBI:29033"/>
    </ligand>
</feature>
<feature type="binding site" description="M1 metal binding site" evidence="1">
    <location>
        <position position="190"/>
    </location>
    <ligand>
        <name>Zn(2+)</name>
        <dbReference type="ChEBI" id="CHEBI:29105"/>
    </ligand>
</feature>
<feature type="binding site" description="M2 metal binding site" evidence="1">
    <location>
        <position position="219"/>
    </location>
    <ligand>
        <name>Fe(2+)</name>
        <dbReference type="ChEBI" id="CHEBI:29033"/>
    </ligand>
</feature>
<gene>
    <name evidence="1" type="primary">zupT</name>
    <name type="ordered locus">Cj0263</name>
</gene>
<name>ZUPT_CAMJE</name>
<comment type="function">
    <text evidence="1">Mediates zinc uptake. May also transport other divalent cations.</text>
</comment>
<comment type="catalytic activity">
    <reaction evidence="1">
        <text>Zn(2+)(in) = Zn(2+)(out)</text>
        <dbReference type="Rhea" id="RHEA:29351"/>
        <dbReference type="ChEBI" id="CHEBI:29105"/>
    </reaction>
</comment>
<comment type="subcellular location">
    <subcellularLocation>
        <location evidence="1">Cell inner membrane</location>
        <topology evidence="1 2">Multi-pass membrane protein</topology>
    </subcellularLocation>
</comment>
<comment type="similarity">
    <text evidence="1 2">Belongs to the ZIP transporter (TC 2.A.5) family. ZupT subfamily.</text>
</comment>